<protein>
    <recommendedName>
        <fullName evidence="5">Large ribosomal subunit protein uL23B</fullName>
    </recommendedName>
    <alternativeName>
        <fullName>60S ribosomal protein L25-B</fullName>
    </alternativeName>
</protein>
<comment type="function">
    <text evidence="1">This protein binds to a specific region on the 26S rRNA.</text>
</comment>
<comment type="function">
    <text evidence="2">Component of the ribosome, a large ribonucleoprotein complex responsible for the synthesis of proteins in the cell. The small ribosomal subunit (SSU) binds messenger RNAs (mRNAs) and translates the encoded message by selecting cognate aminoacyl-transfer RNA (tRNA) molecules. The large subunit (LSU) contains the ribosomal catalytic site termed the peptidyl transferase center (PTC), which catalyzes the formation of peptide bonds, thereby polymerizing the amino acids delivered by tRNAs into a polypeptide chain. The nascent polypeptides leave the ribosome through a tunnel in the LSU and interact with protein factors that function in enzymatic processing, targeting, and the membrane insertion of nascent chains at the exit of the ribosomal tunnel. uL23 is a major component of the universal docking site for these factors at the polypeptide exit tunnel.</text>
</comment>
<comment type="subunit">
    <text evidence="2">Component of the large ribosomal subunit (LSU). Mature yeast ribosomes consist of a small (40S) and a large (60S) subunit. The 40S small subunit contains 1 molecule of ribosomal RNA (18S rRNA) and at least 33 different proteins. The large 60S subunit contains 3 rRNA molecules (25S, 5.8S and 5S rRNA) and at least 46 different proteins. uL23 is associated with the polypeptide exit tunnel.</text>
</comment>
<comment type="subcellular location">
    <subcellularLocation>
        <location evidence="4">Cytoplasm</location>
    </subcellularLocation>
</comment>
<comment type="miscellaneous">
    <text>There are 2 genes for uL23 in S.pombe.</text>
</comment>
<comment type="similarity">
    <text evidence="5">Belongs to the universal ribosomal protein uL23 family.</text>
</comment>
<name>RL25B_SCHPO</name>
<accession>O74391</accession>
<dbReference type="EMBL" id="CU329671">
    <property type="protein sequence ID" value="CAA20724.1"/>
    <property type="molecule type" value="Genomic_DNA"/>
</dbReference>
<dbReference type="PIR" id="T40501">
    <property type="entry name" value="T40501"/>
</dbReference>
<dbReference type="RefSeq" id="NP_596104.1">
    <property type="nucleotide sequence ID" value="NM_001022021.2"/>
</dbReference>
<dbReference type="SMR" id="O74391"/>
<dbReference type="BioGRID" id="277368">
    <property type="interactions" value="26"/>
</dbReference>
<dbReference type="FunCoup" id="O74391">
    <property type="interactions" value="383"/>
</dbReference>
<dbReference type="STRING" id="284812.O74391"/>
<dbReference type="iPTMnet" id="O74391"/>
<dbReference type="PaxDb" id="4896-SPBC4F6.04.1"/>
<dbReference type="EnsemblFungi" id="SPBC4F6.04.1">
    <property type="protein sequence ID" value="SPBC4F6.04.1:pep"/>
    <property type="gene ID" value="SPBC4F6.04"/>
</dbReference>
<dbReference type="GeneID" id="2540851"/>
<dbReference type="KEGG" id="spo:2540851"/>
<dbReference type="PomBase" id="SPBC4F6.04">
    <property type="gene designation" value="rpl2502"/>
</dbReference>
<dbReference type="VEuPathDB" id="FungiDB:SPBC4F6.04"/>
<dbReference type="eggNOG" id="KOG1751">
    <property type="taxonomic scope" value="Eukaryota"/>
</dbReference>
<dbReference type="HOGENOM" id="CLU_037562_0_1_1"/>
<dbReference type="InParanoid" id="O74391"/>
<dbReference type="OMA" id="RLDHHKV"/>
<dbReference type="PhylomeDB" id="O74391"/>
<dbReference type="Reactome" id="R-SPO-156827">
    <property type="pathway name" value="L13a-mediated translational silencing of Ceruloplasmin expression"/>
</dbReference>
<dbReference type="Reactome" id="R-SPO-1799339">
    <property type="pathway name" value="SRP-dependent cotranslational protein targeting to membrane"/>
</dbReference>
<dbReference type="Reactome" id="R-SPO-72689">
    <property type="pathway name" value="Formation of a pool of free 40S subunits"/>
</dbReference>
<dbReference type="Reactome" id="R-SPO-72706">
    <property type="pathway name" value="GTP hydrolysis and joining of the 60S ribosomal subunit"/>
</dbReference>
<dbReference type="Reactome" id="R-SPO-975956">
    <property type="pathway name" value="Nonsense Mediated Decay (NMD) independent of the Exon Junction Complex (EJC)"/>
</dbReference>
<dbReference type="Reactome" id="R-SPO-975957">
    <property type="pathway name" value="Nonsense Mediated Decay (NMD) enhanced by the Exon Junction Complex (EJC)"/>
</dbReference>
<dbReference type="PRO" id="PR:O74391"/>
<dbReference type="Proteomes" id="UP000002485">
    <property type="component" value="Chromosome II"/>
</dbReference>
<dbReference type="GO" id="GO:0005737">
    <property type="term" value="C:cytoplasm"/>
    <property type="evidence" value="ECO:0007005"/>
    <property type="project" value="PomBase"/>
</dbReference>
<dbReference type="GO" id="GO:0022625">
    <property type="term" value="C:cytosolic large ribosomal subunit"/>
    <property type="evidence" value="ECO:0000318"/>
    <property type="project" value="GO_Central"/>
</dbReference>
<dbReference type="GO" id="GO:0019843">
    <property type="term" value="F:rRNA binding"/>
    <property type="evidence" value="ECO:0007669"/>
    <property type="project" value="UniProtKB-KW"/>
</dbReference>
<dbReference type="GO" id="GO:0003735">
    <property type="term" value="F:structural constituent of ribosome"/>
    <property type="evidence" value="ECO:0000318"/>
    <property type="project" value="GO_Central"/>
</dbReference>
<dbReference type="GO" id="GO:0002181">
    <property type="term" value="P:cytoplasmic translation"/>
    <property type="evidence" value="ECO:0000266"/>
    <property type="project" value="PomBase"/>
</dbReference>
<dbReference type="GO" id="GO:0180023">
    <property type="term" value="P:cytosolic large ribosomal subunit assembly"/>
    <property type="evidence" value="ECO:0000266"/>
    <property type="project" value="PomBase"/>
</dbReference>
<dbReference type="FunFam" id="3.30.70.330:FF:000035">
    <property type="entry name" value="60S ribosomal protein L23a"/>
    <property type="match status" value="1"/>
</dbReference>
<dbReference type="Gene3D" id="3.30.70.330">
    <property type="match status" value="1"/>
</dbReference>
<dbReference type="HAMAP" id="MF_01369_A">
    <property type="entry name" value="Ribosomal_uL23_A"/>
    <property type="match status" value="1"/>
</dbReference>
<dbReference type="InterPro" id="IPR012677">
    <property type="entry name" value="Nucleotide-bd_a/b_plait_sf"/>
</dbReference>
<dbReference type="InterPro" id="IPR013025">
    <property type="entry name" value="Ribosomal_uL23-like"/>
</dbReference>
<dbReference type="InterPro" id="IPR012678">
    <property type="entry name" value="Ribosomal_uL23/eL15/eS24_sf"/>
</dbReference>
<dbReference type="InterPro" id="IPR001014">
    <property type="entry name" value="Ribosomal_uL23_CS"/>
</dbReference>
<dbReference type="InterPro" id="IPR005633">
    <property type="entry name" value="Ribosomal_uL23_N"/>
</dbReference>
<dbReference type="NCBIfam" id="NF011118">
    <property type="entry name" value="PRK14548.1"/>
    <property type="match status" value="1"/>
</dbReference>
<dbReference type="PANTHER" id="PTHR11620">
    <property type="entry name" value="60S RIBOSOMAL PROTEIN L23A"/>
    <property type="match status" value="1"/>
</dbReference>
<dbReference type="Pfam" id="PF00276">
    <property type="entry name" value="Ribosomal_L23"/>
    <property type="match status" value="1"/>
</dbReference>
<dbReference type="Pfam" id="PF03939">
    <property type="entry name" value="Ribosomal_L23eN"/>
    <property type="match status" value="1"/>
</dbReference>
<dbReference type="SUPFAM" id="SSF54189">
    <property type="entry name" value="Ribosomal proteins S24e, L23 and L15e"/>
    <property type="match status" value="1"/>
</dbReference>
<dbReference type="PROSITE" id="PS00050">
    <property type="entry name" value="RIBOSOMAL_L23"/>
    <property type="match status" value="1"/>
</dbReference>
<organism>
    <name type="scientific">Schizosaccharomyces pombe (strain 972 / ATCC 24843)</name>
    <name type="common">Fission yeast</name>
    <dbReference type="NCBI Taxonomy" id="284812"/>
    <lineage>
        <taxon>Eukaryota</taxon>
        <taxon>Fungi</taxon>
        <taxon>Dikarya</taxon>
        <taxon>Ascomycota</taxon>
        <taxon>Taphrinomycotina</taxon>
        <taxon>Schizosaccharomycetes</taxon>
        <taxon>Schizosaccharomycetales</taxon>
        <taxon>Schizosaccharomycetaceae</taxon>
        <taxon>Schizosaccharomyces</taxon>
    </lineage>
</organism>
<sequence>MSVGKAKGAQKTVQKGIHNKVARKVRTSTTFRRPKTLELARKPKYARKSVPHASRLDEYKIIVNPINSESAMKKIEDDNTLVFHVHLKANKFTIKNAVKKLYSVDAVKINTLIRPNGTKKAFVKLSADADALDVANRIGFL</sequence>
<gene>
    <name type="primary">rpl2502</name>
    <name type="synonym">rpl25b</name>
    <name type="ORF">SPBC4F6.04</name>
</gene>
<evidence type="ECO:0000250" key="1"/>
<evidence type="ECO:0000250" key="2">
    <source>
        <dbReference type="UniProtKB" id="P04456"/>
    </source>
</evidence>
<evidence type="ECO:0000256" key="3">
    <source>
        <dbReference type="SAM" id="MobiDB-lite"/>
    </source>
</evidence>
<evidence type="ECO:0000269" key="4">
    <source>
    </source>
</evidence>
<evidence type="ECO:0000305" key="5"/>
<proteinExistence type="inferred from homology"/>
<keyword id="KW-0963">Cytoplasm</keyword>
<keyword id="KW-1185">Reference proteome</keyword>
<keyword id="KW-0687">Ribonucleoprotein</keyword>
<keyword id="KW-0689">Ribosomal protein</keyword>
<keyword id="KW-0694">RNA-binding</keyword>
<keyword id="KW-0699">rRNA-binding</keyword>
<feature type="chain" id="PRO_0000129482" description="Large ribosomal subunit protein uL23B">
    <location>
        <begin position="1"/>
        <end position="141"/>
    </location>
</feature>
<feature type="region of interest" description="Disordered" evidence="3">
    <location>
        <begin position="1"/>
        <end position="22"/>
    </location>
</feature>
<reference key="1">
    <citation type="journal article" date="2002" name="Nature">
        <title>The genome sequence of Schizosaccharomyces pombe.</title>
        <authorList>
            <person name="Wood V."/>
            <person name="Gwilliam R."/>
            <person name="Rajandream M.A."/>
            <person name="Lyne M.H."/>
            <person name="Lyne R."/>
            <person name="Stewart A."/>
            <person name="Sgouros J.G."/>
            <person name="Peat N."/>
            <person name="Hayles J."/>
            <person name="Baker S.G."/>
            <person name="Basham D."/>
            <person name="Bowman S."/>
            <person name="Brooks K."/>
            <person name="Brown D."/>
            <person name="Brown S."/>
            <person name="Chillingworth T."/>
            <person name="Churcher C.M."/>
            <person name="Collins M."/>
            <person name="Connor R."/>
            <person name="Cronin A."/>
            <person name="Davis P."/>
            <person name="Feltwell T."/>
            <person name="Fraser A."/>
            <person name="Gentles S."/>
            <person name="Goble A."/>
            <person name="Hamlin N."/>
            <person name="Harris D.E."/>
            <person name="Hidalgo J."/>
            <person name="Hodgson G."/>
            <person name="Holroyd S."/>
            <person name="Hornsby T."/>
            <person name="Howarth S."/>
            <person name="Huckle E.J."/>
            <person name="Hunt S."/>
            <person name="Jagels K."/>
            <person name="James K.D."/>
            <person name="Jones L."/>
            <person name="Jones M."/>
            <person name="Leather S."/>
            <person name="McDonald S."/>
            <person name="McLean J."/>
            <person name="Mooney P."/>
            <person name="Moule S."/>
            <person name="Mungall K.L."/>
            <person name="Murphy L.D."/>
            <person name="Niblett D."/>
            <person name="Odell C."/>
            <person name="Oliver K."/>
            <person name="O'Neil S."/>
            <person name="Pearson D."/>
            <person name="Quail M.A."/>
            <person name="Rabbinowitsch E."/>
            <person name="Rutherford K.M."/>
            <person name="Rutter S."/>
            <person name="Saunders D."/>
            <person name="Seeger K."/>
            <person name="Sharp S."/>
            <person name="Skelton J."/>
            <person name="Simmonds M.N."/>
            <person name="Squares R."/>
            <person name="Squares S."/>
            <person name="Stevens K."/>
            <person name="Taylor K."/>
            <person name="Taylor R.G."/>
            <person name="Tivey A."/>
            <person name="Walsh S.V."/>
            <person name="Warren T."/>
            <person name="Whitehead S."/>
            <person name="Woodward J.R."/>
            <person name="Volckaert G."/>
            <person name="Aert R."/>
            <person name="Robben J."/>
            <person name="Grymonprez B."/>
            <person name="Weltjens I."/>
            <person name="Vanstreels E."/>
            <person name="Rieger M."/>
            <person name="Schaefer M."/>
            <person name="Mueller-Auer S."/>
            <person name="Gabel C."/>
            <person name="Fuchs M."/>
            <person name="Duesterhoeft A."/>
            <person name="Fritzc C."/>
            <person name="Holzer E."/>
            <person name="Moestl D."/>
            <person name="Hilbert H."/>
            <person name="Borzym K."/>
            <person name="Langer I."/>
            <person name="Beck A."/>
            <person name="Lehrach H."/>
            <person name="Reinhardt R."/>
            <person name="Pohl T.M."/>
            <person name="Eger P."/>
            <person name="Zimmermann W."/>
            <person name="Wedler H."/>
            <person name="Wambutt R."/>
            <person name="Purnelle B."/>
            <person name="Goffeau A."/>
            <person name="Cadieu E."/>
            <person name="Dreano S."/>
            <person name="Gloux S."/>
            <person name="Lelaure V."/>
            <person name="Mottier S."/>
            <person name="Galibert F."/>
            <person name="Aves S.J."/>
            <person name="Xiang Z."/>
            <person name="Hunt C."/>
            <person name="Moore K."/>
            <person name="Hurst S.M."/>
            <person name="Lucas M."/>
            <person name="Rochet M."/>
            <person name="Gaillardin C."/>
            <person name="Tallada V.A."/>
            <person name="Garzon A."/>
            <person name="Thode G."/>
            <person name="Daga R.R."/>
            <person name="Cruzado L."/>
            <person name="Jimenez J."/>
            <person name="Sanchez M."/>
            <person name="del Rey F."/>
            <person name="Benito J."/>
            <person name="Dominguez A."/>
            <person name="Revuelta J.L."/>
            <person name="Moreno S."/>
            <person name="Armstrong J."/>
            <person name="Forsburg S.L."/>
            <person name="Cerutti L."/>
            <person name="Lowe T."/>
            <person name="McCombie W.R."/>
            <person name="Paulsen I."/>
            <person name="Potashkin J."/>
            <person name="Shpakovski G.V."/>
            <person name="Ussery D."/>
            <person name="Barrell B.G."/>
            <person name="Nurse P."/>
        </authorList>
    </citation>
    <scope>NUCLEOTIDE SEQUENCE [LARGE SCALE GENOMIC DNA]</scope>
    <source>
        <strain>972 / ATCC 24843</strain>
    </source>
</reference>
<reference key="2">
    <citation type="journal article" date="2006" name="Nat. Biotechnol.">
        <title>ORFeome cloning and global analysis of protein localization in the fission yeast Schizosaccharomyces pombe.</title>
        <authorList>
            <person name="Matsuyama A."/>
            <person name="Arai R."/>
            <person name="Yashiroda Y."/>
            <person name="Shirai A."/>
            <person name="Kamata A."/>
            <person name="Sekido S."/>
            <person name="Kobayashi Y."/>
            <person name="Hashimoto A."/>
            <person name="Hamamoto M."/>
            <person name="Hiraoka Y."/>
            <person name="Horinouchi S."/>
            <person name="Yoshida M."/>
        </authorList>
    </citation>
    <scope>SUBCELLULAR LOCATION [LARGE SCALE ANALYSIS]</scope>
</reference>